<gene>
    <name evidence="11" type="primary">dpy-31</name>
    <name evidence="13" type="synonym">nas-35</name>
</gene>
<comment type="function">
    <text evidence="10">Metalloprotease which cleaves the carboxyl terminus of procollagens to mature collagens. Probably involved in cuticular collagen maturation.</text>
</comment>
<comment type="cofactor">
    <cofactor evidence="8">
        <name>Zn(2+)</name>
        <dbReference type="ChEBI" id="CHEBI:29105"/>
    </cofactor>
    <text evidence="8">Binds 1 zinc ion per subunit.</text>
</comment>
<comment type="subcellular location">
    <subcellularLocation>
        <location evidence="12">Secreted</location>
    </subcellularLocation>
</comment>
<comment type="alternative products">
    <event type="alternative splicing"/>
    <isoform>
        <id>D5FM34-1</id>
        <name evidence="11">dpy-31a</name>
        <sequence type="displayed"/>
    </isoform>
    <isoform>
        <id>D5FM34-2</id>
        <name evidence="11">dpy-31b</name>
        <sequence type="described" ref="VSP_059218"/>
    </isoform>
</comment>
<accession>D5FM34</accession>
<accession>D5FM33</accession>
<name>NAS35_HAECO</name>
<keyword id="KW-0025">Alternative splicing</keyword>
<keyword id="KW-0165">Cleavage on pair of basic residues</keyword>
<keyword id="KW-1015">Disulfide bond</keyword>
<keyword id="KW-0245">EGF-like domain</keyword>
<keyword id="KW-0325">Glycoprotein</keyword>
<keyword id="KW-0378">Hydrolase</keyword>
<keyword id="KW-0479">Metal-binding</keyword>
<keyword id="KW-0482">Metalloprotease</keyword>
<keyword id="KW-0645">Protease</keyword>
<keyword id="KW-0964">Secreted</keyword>
<keyword id="KW-0732">Signal</keyword>
<keyword id="KW-0862">Zinc</keyword>
<evidence type="ECO:0000250" key="1">
    <source>
        <dbReference type="UniProtKB" id="P13497"/>
    </source>
</evidence>
<evidence type="ECO:0000250" key="2">
    <source>
        <dbReference type="UniProtKB" id="P98060"/>
    </source>
</evidence>
<evidence type="ECO:0000255" key="3"/>
<evidence type="ECO:0000255" key="4">
    <source>
        <dbReference type="PROSITE-ProRule" id="PRU00059"/>
    </source>
</evidence>
<evidence type="ECO:0000255" key="5">
    <source>
        <dbReference type="PROSITE-ProRule" id="PRU00076"/>
    </source>
</evidence>
<evidence type="ECO:0000255" key="6">
    <source>
        <dbReference type="PROSITE-ProRule" id="PRU00210"/>
    </source>
</evidence>
<evidence type="ECO:0000255" key="7">
    <source>
        <dbReference type="PROSITE-ProRule" id="PRU00498"/>
    </source>
</evidence>
<evidence type="ECO:0000255" key="8">
    <source>
        <dbReference type="PROSITE-ProRule" id="PRU01211"/>
    </source>
</evidence>
<evidence type="ECO:0000255" key="9">
    <source>
        <dbReference type="RuleBase" id="RU361183"/>
    </source>
</evidence>
<evidence type="ECO:0000269" key="10">
    <source>
    </source>
</evidence>
<evidence type="ECO:0000303" key="11">
    <source>
    </source>
</evidence>
<evidence type="ECO:0000305" key="12"/>
<evidence type="ECO:0000312" key="13">
    <source>
        <dbReference type="EMBL" id="ACZ64269.1"/>
    </source>
</evidence>
<proteinExistence type="evidence at protein level"/>
<reference evidence="13" key="1">
    <citation type="journal article" date="2010" name="Int. J. Parasitol.">
        <title>Collagen processing and cuticle formation is catalysed by the astacin metalloprotease DPY-31 in free-living and parasitic nematodes.</title>
        <authorList>
            <person name="Stepek G."/>
            <person name="McCormack G."/>
            <person name="Page A.P."/>
        </authorList>
    </citation>
    <scope>NUCLEOTIDE SEQUENCE [GENOMIC DNA]</scope>
    <scope>FUNCTION</scope>
    <scope>CATALYTIC ACTIVITY</scope>
    <scope>ALTERNATIVE SPLICING</scope>
</reference>
<dbReference type="EC" id="3.4.24.-" evidence="10"/>
<dbReference type="EMBL" id="FJ812517">
    <property type="protein sequence ID" value="ACZ64268.1"/>
    <property type="molecule type" value="Genomic_DNA"/>
</dbReference>
<dbReference type="EMBL" id="FJ812517">
    <property type="protein sequence ID" value="ACZ64269.1"/>
    <property type="molecule type" value="Genomic_DNA"/>
</dbReference>
<dbReference type="SMR" id="D5FM34"/>
<dbReference type="MEROPS" id="M12.321"/>
<dbReference type="GlyCosmos" id="D5FM34">
    <property type="glycosylation" value="2 sites, No reported glycans"/>
</dbReference>
<dbReference type="BRENDA" id="3.4.24.21">
    <property type="organism ID" value="2523"/>
</dbReference>
<dbReference type="Proteomes" id="UP000025227">
    <property type="component" value="Unplaced"/>
</dbReference>
<dbReference type="GO" id="GO:0005576">
    <property type="term" value="C:extracellular region"/>
    <property type="evidence" value="ECO:0007669"/>
    <property type="project" value="UniProtKB-SubCell"/>
</dbReference>
<dbReference type="GO" id="GO:0004222">
    <property type="term" value="F:metalloendopeptidase activity"/>
    <property type="evidence" value="ECO:0007669"/>
    <property type="project" value="InterPro"/>
</dbReference>
<dbReference type="GO" id="GO:0008270">
    <property type="term" value="F:zinc ion binding"/>
    <property type="evidence" value="ECO:0007669"/>
    <property type="project" value="InterPro"/>
</dbReference>
<dbReference type="GO" id="GO:0018996">
    <property type="term" value="P:molting cycle, collagen and cuticulin-based cuticle"/>
    <property type="evidence" value="ECO:0007669"/>
    <property type="project" value="InterPro"/>
</dbReference>
<dbReference type="GO" id="GO:0006508">
    <property type="term" value="P:proteolysis"/>
    <property type="evidence" value="ECO:0007669"/>
    <property type="project" value="UniProtKB-KW"/>
</dbReference>
<dbReference type="CDD" id="cd00041">
    <property type="entry name" value="CUB"/>
    <property type="match status" value="1"/>
</dbReference>
<dbReference type="CDD" id="cd00054">
    <property type="entry name" value="EGF_CA"/>
    <property type="match status" value="1"/>
</dbReference>
<dbReference type="CDD" id="cd04280">
    <property type="entry name" value="ZnMc_astacin_like"/>
    <property type="match status" value="1"/>
</dbReference>
<dbReference type="FunFam" id="2.60.120.290:FF:000093">
    <property type="entry name" value="Zinc metalloproteinase"/>
    <property type="match status" value="1"/>
</dbReference>
<dbReference type="FunFam" id="3.40.390.10:FF:000028">
    <property type="entry name" value="Zinc metalloproteinase"/>
    <property type="match status" value="1"/>
</dbReference>
<dbReference type="Gene3D" id="3.40.390.10">
    <property type="entry name" value="Collagenase (Catalytic Domain)"/>
    <property type="match status" value="1"/>
</dbReference>
<dbReference type="Gene3D" id="2.60.120.290">
    <property type="entry name" value="Spermadhesin, CUB domain"/>
    <property type="match status" value="1"/>
</dbReference>
<dbReference type="Gene3D" id="2.20.100.10">
    <property type="entry name" value="Thrombospondin type-1 (TSP1) repeat"/>
    <property type="match status" value="1"/>
</dbReference>
<dbReference type="InterPro" id="IPR034035">
    <property type="entry name" value="Astacin-like_dom"/>
</dbReference>
<dbReference type="InterPro" id="IPR000859">
    <property type="entry name" value="CUB_dom"/>
</dbReference>
<dbReference type="InterPro" id="IPR000742">
    <property type="entry name" value="EGF-like_dom"/>
</dbReference>
<dbReference type="InterPro" id="IPR024079">
    <property type="entry name" value="MetalloPept_cat_dom_sf"/>
</dbReference>
<dbReference type="InterPro" id="IPR017050">
    <property type="entry name" value="Metallopeptidase_nem"/>
</dbReference>
<dbReference type="InterPro" id="IPR001506">
    <property type="entry name" value="Peptidase_M12A"/>
</dbReference>
<dbReference type="InterPro" id="IPR006026">
    <property type="entry name" value="Peptidase_Metallo"/>
</dbReference>
<dbReference type="InterPro" id="IPR035914">
    <property type="entry name" value="Sperma_CUB_dom_sf"/>
</dbReference>
<dbReference type="InterPro" id="IPR000884">
    <property type="entry name" value="TSP1_rpt"/>
</dbReference>
<dbReference type="InterPro" id="IPR036383">
    <property type="entry name" value="TSP1_rpt_sf"/>
</dbReference>
<dbReference type="PANTHER" id="PTHR10127">
    <property type="entry name" value="DISCOIDIN, CUB, EGF, LAMININ , AND ZINC METALLOPROTEASE DOMAIN CONTAINING"/>
    <property type="match status" value="1"/>
</dbReference>
<dbReference type="PANTHER" id="PTHR10127:SF813">
    <property type="entry name" value="ZINC METALLOPROTEINASE DPY-31"/>
    <property type="match status" value="1"/>
</dbReference>
<dbReference type="Pfam" id="PF01400">
    <property type="entry name" value="Astacin"/>
    <property type="match status" value="1"/>
</dbReference>
<dbReference type="Pfam" id="PF00431">
    <property type="entry name" value="CUB"/>
    <property type="match status" value="1"/>
</dbReference>
<dbReference type="Pfam" id="PF00090">
    <property type="entry name" value="TSP_1"/>
    <property type="match status" value="1"/>
</dbReference>
<dbReference type="PIRSF" id="PIRSF036365">
    <property type="entry name" value="Astacin_nematoda"/>
    <property type="match status" value="1"/>
</dbReference>
<dbReference type="PRINTS" id="PR00480">
    <property type="entry name" value="ASTACIN"/>
</dbReference>
<dbReference type="SMART" id="SM00042">
    <property type="entry name" value="CUB"/>
    <property type="match status" value="1"/>
</dbReference>
<dbReference type="SMART" id="SM00235">
    <property type="entry name" value="ZnMc"/>
    <property type="match status" value="1"/>
</dbReference>
<dbReference type="SUPFAM" id="SSF55486">
    <property type="entry name" value="Metalloproteases ('zincins'), catalytic domain"/>
    <property type="match status" value="1"/>
</dbReference>
<dbReference type="SUPFAM" id="SSF49854">
    <property type="entry name" value="Spermadhesin, CUB domain"/>
    <property type="match status" value="1"/>
</dbReference>
<dbReference type="SUPFAM" id="SSF82895">
    <property type="entry name" value="TSP-1 type 1 repeat"/>
    <property type="match status" value="1"/>
</dbReference>
<dbReference type="PROSITE" id="PS51864">
    <property type="entry name" value="ASTACIN"/>
    <property type="match status" value="1"/>
</dbReference>
<dbReference type="PROSITE" id="PS01180">
    <property type="entry name" value="CUB"/>
    <property type="match status" value="1"/>
</dbReference>
<dbReference type="PROSITE" id="PS00022">
    <property type="entry name" value="EGF_1"/>
    <property type="match status" value="1"/>
</dbReference>
<dbReference type="PROSITE" id="PS01186">
    <property type="entry name" value="EGF_2"/>
    <property type="match status" value="1"/>
</dbReference>
<dbReference type="PROSITE" id="PS50092">
    <property type="entry name" value="TSP1"/>
    <property type="match status" value="1"/>
</dbReference>
<dbReference type="PROSITE" id="PS00142">
    <property type="entry name" value="ZINC_PROTEASE"/>
    <property type="match status" value="1"/>
</dbReference>
<sequence length="548" mass="62762">MSLLRSASLLLVVVTAALPPCTLGYSLHDGSRLDDVIAEFTAERRPRRLATPAQRRLMGLTEEQHKTVQFYLDKLRELGNRRHPESYNKDSPKNEAYKWRKQMRDDLKTELLNPEKYGRHFEGDIILFPEQAKQIYENALKTGQRRVKRKFIGSDLRRWDPTRPIIYSFDGSHTSREQRIIELALEHRHNITCLNFVRNDNANKGNRIVFTDVDGCASNVGRHPLGEEQLVSLAPECIRLGVIAHEVAHALGFWHEQSRPDRDQFVNVRWENIDKDSKGQFLKEDPDDVDNAGVPYDYGSIMHYRSKAFSRYDDLYTISTFVTDYQKTIGQRDQLSFNDIRLMNKIYCSNVCSRKLPCQRGGYTDPRRCDRCRCPDGFTGQFCEQVMPGYGAVCGGRIQVNSGWTRFSSPGYPREFKEGQECSWLLVAPPGQVVEMQFIGEFEMYCKVRHSLCMDYVEVRNSTDFANTGMRYCCYGTPSTSIRSATTDLVVLFRSFYRGGRGFEARARALPANGQWASWTPWTPCTASCGACGSRMRTRVCPHGACPC</sequence>
<protein>
    <recommendedName>
        <fullName evidence="2">Zinc metalloproteinase dpy-31</fullName>
        <ecNumber evidence="10">3.4.24.-</ecNumber>
    </recommendedName>
    <alternativeName>
        <fullName evidence="11">Nematode astacin 35</fullName>
    </alternativeName>
    <alternativeName>
        <fullName evidence="2">Procollagen C-proteinase</fullName>
    </alternativeName>
</protein>
<feature type="signal peptide" evidence="3">
    <location>
        <begin position="1"/>
        <end position="24"/>
    </location>
</feature>
<feature type="propeptide" id="PRO_0000442246" evidence="1">
    <location>
        <begin position="25"/>
        <end position="150"/>
    </location>
</feature>
<feature type="chain" id="PRO_5005126563" description="Zinc metalloproteinase dpy-31" evidence="9">
    <location>
        <begin position="151"/>
        <end position="548"/>
    </location>
</feature>
<feature type="domain" description="Peptidase M12A" evidence="8">
    <location>
        <begin position="150"/>
        <end position="349"/>
    </location>
</feature>
<feature type="domain" description="EGF-like" evidence="5">
    <location>
        <begin position="344"/>
        <end position="384"/>
    </location>
</feature>
<feature type="domain" description="CUB" evidence="4">
    <location>
        <begin position="394"/>
        <end position="510"/>
    </location>
</feature>
<feature type="domain" description="TSP type-1" evidence="6">
    <location>
        <begin position="513"/>
        <end position="547"/>
    </location>
</feature>
<feature type="active site" evidence="8">
    <location>
        <position position="246"/>
    </location>
</feature>
<feature type="binding site" evidence="8">
    <location>
        <position position="245"/>
    </location>
    <ligand>
        <name>Zn(2+)</name>
        <dbReference type="ChEBI" id="CHEBI:29105"/>
        <note>catalytic</note>
    </ligand>
</feature>
<feature type="binding site" evidence="8">
    <location>
        <position position="249"/>
    </location>
    <ligand>
        <name>Zn(2+)</name>
        <dbReference type="ChEBI" id="CHEBI:29105"/>
        <note>catalytic</note>
    </ligand>
</feature>
<feature type="binding site" evidence="8">
    <location>
        <position position="255"/>
    </location>
    <ligand>
        <name>Zn(2+)</name>
        <dbReference type="ChEBI" id="CHEBI:29105"/>
        <note>catalytic</note>
    </ligand>
</feature>
<feature type="glycosylation site" description="N-linked (GlcNAc...) asparagine" evidence="7">
    <location>
        <position position="190"/>
    </location>
</feature>
<feature type="glycosylation site" description="N-linked (GlcNAc...) asparagine" evidence="7">
    <location>
        <position position="461"/>
    </location>
</feature>
<feature type="disulfide bond" evidence="8">
    <location>
        <begin position="193"/>
        <end position="348"/>
    </location>
</feature>
<feature type="disulfide bond" evidence="8">
    <location>
        <begin position="216"/>
        <end position="237"/>
    </location>
</feature>
<feature type="disulfide bond" evidence="5">
    <location>
        <begin position="352"/>
        <end position="372"/>
    </location>
</feature>
<feature type="disulfide bond" evidence="5">
    <location>
        <begin position="374"/>
        <end position="383"/>
    </location>
</feature>
<feature type="disulfide bond" evidence="4">
    <location>
        <begin position="394"/>
        <end position="422"/>
    </location>
</feature>
<feature type="disulfide bond" evidence="6">
    <location>
        <begin position="525"/>
        <end position="546"/>
    </location>
</feature>
<feature type="disulfide bond" evidence="6">
    <location>
        <begin position="529"/>
        <end position="546"/>
    </location>
</feature>
<feature type="disulfide bond" evidence="6">
    <location>
        <begin position="541"/>
        <end position="546"/>
    </location>
</feature>
<feature type="splice variant" id="VSP_059218" description="In isoform dpy-31b." evidence="12">
    <original>C</original>
    <variation>GEPVENQVCNTHPCNGLCAHKKTEDGECGGFLALLRGVRQANGPNFDKSAVMACCHIVVGIVVLVEDVIFGVREIA</variation>
    <location>
        <position position="548"/>
    </location>
</feature>
<organism evidence="13">
    <name type="scientific">Haemonchus contortus</name>
    <name type="common">Barber pole worm</name>
    <dbReference type="NCBI Taxonomy" id="6289"/>
    <lineage>
        <taxon>Eukaryota</taxon>
        <taxon>Metazoa</taxon>
        <taxon>Ecdysozoa</taxon>
        <taxon>Nematoda</taxon>
        <taxon>Chromadorea</taxon>
        <taxon>Rhabditida</taxon>
        <taxon>Rhabditina</taxon>
        <taxon>Rhabditomorpha</taxon>
        <taxon>Strongyloidea</taxon>
        <taxon>Trichostrongylidae</taxon>
        <taxon>Haemonchus</taxon>
    </lineage>
</organism>